<accession>Q9ERI5</accession>
<accession>A2AA26</accession>
<accession>A8Y5I2</accession>
<accession>Q80TX1</accession>
<evidence type="ECO:0000250" key="1"/>
<evidence type="ECO:0000250" key="2">
    <source>
        <dbReference type="UniProtKB" id="Q6NYC1"/>
    </source>
</evidence>
<evidence type="ECO:0000255" key="3">
    <source>
        <dbReference type="PROSITE-ProRule" id="PRU00538"/>
    </source>
</evidence>
<evidence type="ECO:0000256" key="4">
    <source>
        <dbReference type="SAM" id="MobiDB-lite"/>
    </source>
</evidence>
<evidence type="ECO:0000269" key="5">
    <source>
    </source>
</evidence>
<evidence type="ECO:0000269" key="6">
    <source>
    </source>
</evidence>
<evidence type="ECO:0000269" key="7">
    <source>
    </source>
</evidence>
<evidence type="ECO:0000269" key="8">
    <source>
    </source>
</evidence>
<evidence type="ECO:0000269" key="9">
    <source>
    </source>
</evidence>
<evidence type="ECO:0000269" key="10">
    <source>
    </source>
</evidence>
<evidence type="ECO:0000269" key="11">
    <source>
    </source>
</evidence>
<evidence type="ECO:0000303" key="12">
    <source>
    </source>
</evidence>
<evidence type="ECO:0000305" key="13"/>
<protein>
    <recommendedName>
        <fullName>Bifunctional arginine demethylase and lysyl-hydroxylase JMJD6</fullName>
        <ecNumber>1.14.11.-</ecNumber>
    </recommendedName>
    <alternativeName>
        <fullName>Histone arginine demethylase JMJD6</fullName>
    </alternativeName>
    <alternativeName>
        <fullName>JmjC domain-containing protein 6</fullName>
    </alternativeName>
    <alternativeName>
        <fullName>Jumonji domain-containing protein 6</fullName>
    </alternativeName>
    <alternativeName>
        <fullName>Lysyl-hydroxylase JMJD6</fullName>
    </alternativeName>
    <alternativeName>
        <fullName>Peptide-lysine 5-dioxygenase JMJD6</fullName>
    </alternativeName>
    <alternativeName>
        <fullName>Phosphatidylserine receptor</fullName>
        <shortName>Protein PTDSR</shortName>
    </alternativeName>
</protein>
<gene>
    <name type="primary">Jmjd6</name>
    <name type="synonym">Kiaa0585</name>
    <name type="synonym">Ptdsr</name>
</gene>
<comment type="function">
    <text evidence="2 8 9 10 11">Dioxygenase that can both act as a arginine demethylase and a lysyl-hydroxylase. Acts as a lysyl-hydroxylase that catalyzes 5-hydroxylation on specific lysine residues of target proteins such as U2AF2/U2AF65 and LUC7L2. Regulates RNA splicing by mediating 5-hydroxylation of U2AF2/U2AF65, affecting the pre-mRNA splicing activity of U2AF2/U2AF65. Hydroxylates its own N-terminus, which is required for homooligomerization (By similarity). Plays a role in the regulation of nucleolar liquid-liquid phase separation (LLPS) by post-translationally modifying LIAT1 at its lysine-rich domain which inhibits LIAT1 nucleolar targeting (PubMed:25369936, PubMed:33443146). In addition to peptidyl-lysine 5-dioxygenase activity, may act as an RNA hydroxylase, as suggested by its ability to bind single strand RNA. Also acts as an arginine demethylase which preferentially demethylates asymmetric dimethylation. Demethylates histone H3 at 'Arg-2' (H3R2me) and histone H4 at 'Arg-3' (H4R3me), including mono-, symmetric di- and asymmetric dimethylated forms, thereby playing a role in histone code. However, histone arginine demethylation may not constitute the primary activity in vivo. In collaboration with BRD4, interacts with the positive transcription elongation factor b (P-TEFb) complex in its active form to regulate polymerase II promoter-proximal pause release for transcriptional activation of a large cohort of genes. On distal enhancers, so called anti-pause enhancers, demethylates both histone H4R3me2 and the methyl cap of 7SKsnRNA leading to the dismissal of the 7SKsnRNA:HEXIM1 inhibitor complex. After removal of repressive marks, the complex BRD4:JMJD6 attract and retain the P-TEFb complex on chromatin, leading to its activation, promoter-proximal polymerase II pause release, and transcriptional activation. Demethylates other arginine methylated-proteins such as ESR1. Has no histone lysine demethylase activity (By similarity). Required for differentiation of multiple organs during embryogenesis (PubMed:15345036). Acts as a key regulator of hematopoietic differentiation: required for angiogenic sprouting by regulating the pre-mRNA splicing activity of U2AF2/U2AF65 (PubMed:21300889). Seems to be necessary for the regulation of macrophage cytokine responses (By similarity).</text>
</comment>
<comment type="catalytic activity">
    <reaction evidence="2">
        <text>L-lysyl-[protein] + 2-oxoglutarate + O2 = (5S)-5-hydroxy-L-lysyl-[protein] + succinate + CO2</text>
        <dbReference type="Rhea" id="RHEA:58360"/>
        <dbReference type="Rhea" id="RHEA-COMP:9752"/>
        <dbReference type="Rhea" id="RHEA-COMP:15144"/>
        <dbReference type="ChEBI" id="CHEBI:15379"/>
        <dbReference type="ChEBI" id="CHEBI:16526"/>
        <dbReference type="ChEBI" id="CHEBI:16810"/>
        <dbReference type="ChEBI" id="CHEBI:29969"/>
        <dbReference type="ChEBI" id="CHEBI:30031"/>
        <dbReference type="ChEBI" id="CHEBI:141843"/>
    </reaction>
</comment>
<comment type="catalytic activity">
    <reaction evidence="2">
        <text>N(omega),N(omega)'-dimethyl-L-arginyl-[protein] + 2 2-oxoglutarate + 2 O2 = L-arginyl-[protein] + 2 formaldehyde + 2 succinate + 2 CO2</text>
        <dbReference type="Rhea" id="RHEA:58348"/>
        <dbReference type="Rhea" id="RHEA-COMP:10532"/>
        <dbReference type="Rhea" id="RHEA-COMP:11992"/>
        <dbReference type="ChEBI" id="CHEBI:15379"/>
        <dbReference type="ChEBI" id="CHEBI:16526"/>
        <dbReference type="ChEBI" id="CHEBI:16810"/>
        <dbReference type="ChEBI" id="CHEBI:16842"/>
        <dbReference type="ChEBI" id="CHEBI:29965"/>
        <dbReference type="ChEBI" id="CHEBI:30031"/>
        <dbReference type="ChEBI" id="CHEBI:88221"/>
    </reaction>
</comment>
<comment type="catalytic activity">
    <reaction evidence="2">
        <text>N(omega),N(omega)'-dimethyl-L-arginyl-[protein] + 2-oxoglutarate + O2 = N(omega)-methyl-L-arginyl-[protein] + formaldehyde + succinate + CO2</text>
        <dbReference type="Rhea" id="RHEA:58472"/>
        <dbReference type="Rhea" id="RHEA-COMP:11990"/>
        <dbReference type="Rhea" id="RHEA-COMP:11992"/>
        <dbReference type="ChEBI" id="CHEBI:15379"/>
        <dbReference type="ChEBI" id="CHEBI:16526"/>
        <dbReference type="ChEBI" id="CHEBI:16810"/>
        <dbReference type="ChEBI" id="CHEBI:16842"/>
        <dbReference type="ChEBI" id="CHEBI:30031"/>
        <dbReference type="ChEBI" id="CHEBI:65280"/>
        <dbReference type="ChEBI" id="CHEBI:88221"/>
    </reaction>
</comment>
<comment type="catalytic activity">
    <reaction evidence="2">
        <text>a 5'-end methyltriphosphate-guanosine-ribonucleotide-snRNA + 2-oxoglutarate + O2 = a 5'-end triphospho-guanosine-ribonucleotide-snRNA + formaldehyde + succinate + CO2 + H(+)</text>
        <dbReference type="Rhea" id="RHEA:58784"/>
        <dbReference type="Rhea" id="RHEA-COMP:15220"/>
        <dbReference type="Rhea" id="RHEA-COMP:15221"/>
        <dbReference type="ChEBI" id="CHEBI:15378"/>
        <dbReference type="ChEBI" id="CHEBI:15379"/>
        <dbReference type="ChEBI" id="CHEBI:16526"/>
        <dbReference type="ChEBI" id="CHEBI:16810"/>
        <dbReference type="ChEBI" id="CHEBI:16842"/>
        <dbReference type="ChEBI" id="CHEBI:30031"/>
        <dbReference type="ChEBI" id="CHEBI:138278"/>
        <dbReference type="ChEBI" id="CHEBI:142789"/>
    </reaction>
</comment>
<comment type="cofactor">
    <cofactor evidence="2">
        <name>Fe(2+)</name>
        <dbReference type="ChEBI" id="CHEBI:29033"/>
    </cofactor>
    <text evidence="2">Binds 1 Fe(2+) ion per subunit.</text>
</comment>
<comment type="subunit">
    <text evidence="2 9 10">Homooligomerizes; requires lysyl-hydroxylase activity (By similarity). Interacts with LUC7L2, LUC7L3 and U2AF2/U2AF65 (PubMed:21300889). Interacts with CDK9 and CCNT1; the interaction is direct with CDK9 and associates the P-TEFb complex when active. Interacts (via JmjC and N-terminal domains) with BRD4 (via NET domain); the interaction is stronger in presence of ssRNA and recruits JMJD6 on distal enhancers (By similarity). Interacts with ARGLU1; interaction may be involved in ARGLU1-mediated modulation of alternative splicing (By similarity).</text>
</comment>
<comment type="subcellular location">
    <subcellularLocation>
        <location evidence="7">Nucleus</location>
        <location evidence="7">Nucleoplasm</location>
    </subcellularLocation>
    <subcellularLocation>
        <location evidence="2">Nucleus</location>
        <location evidence="2">Nucleolus</location>
    </subcellularLocation>
    <subcellularLocation>
        <location evidence="2">Cytoplasm</location>
    </subcellularLocation>
    <text evidence="2">Mainly found throughout the nucleoplasm outside of regions containing heterochromatic DNA, with some localization in nucleolus. During mitosis, excluded from the nucleus and reappears in the telophase of the cell cycle.</text>
</comment>
<comment type="alternative products">
    <event type="alternative splicing"/>
    <isoform>
        <id>Q9ERI5-1</id>
        <name>1</name>
        <sequence type="displayed"/>
    </isoform>
    <isoform>
        <id>Q9ERI5-2</id>
        <name>2</name>
        <sequence type="described" ref="VSP_014024 VSP_014025"/>
    </isoform>
</comment>
<comment type="tissue specificity">
    <text evidence="5 8">Widely expressed. Expressed in brain, eye, spinal chord, thymus, lung, liver, kidney and intestine.</text>
</comment>
<comment type="developmental stage">
    <text evidence="5 8">Expressed early in development. Expressed from embryonic stem cells and throughout embryogenesis.</text>
</comment>
<comment type="domain">
    <text evidence="2">The nuclear localization signal motifs are necessary and sufficient to target it into the nucleus.</text>
</comment>
<comment type="PTM">
    <text evidence="2">Hydroxylates its own N-terminus; hydroxylation is required for homooligomerization.</text>
</comment>
<comment type="disruption phenotype">
    <text evidence="5 6 8">Mice display perinatal lethality, growth retardation, severe anemia and a delay in terminal differentiation of the kidney, intestine, liver and lungs during embryogenesis. Moreover, eye development can be severely disturbed, ranging from defects in retinal differentiation to complete unilateral or bilateral absence of eyes. According to PubMed:14645847, mice are defective in removing apoptotic cells, especially in the lung and brain, in which dead cells accumulate, causing abnormal development and leading to neonatal lethality. According to PubMed:14715629, mice lacking Jmjd6 display a reduced number of macrophages and apoptotic cells in fetal liver. In contrast, according to PubMed:15345036, mice show a normal engulfment of apoptotic cells. The contradictory results concerning apoptosis and macrophage function may be explained by the fact that the protein plays a key role in hematopoietic differentiation.</text>
</comment>
<comment type="similarity">
    <text evidence="13">Belongs to the JMJD6 family.</text>
</comment>
<comment type="caution">
    <text evidence="13">Was initially thought to constitute the phosphatidylserine receptor, a receptor that mediates recognition of phosphatidylserine, a specific marker only present at the surface of apoptotic cells. Phosphatidylserine receptor probably participates in apoptotic cell phagocytosis. This protein was identified using phage display expressing mAb 217, an antibody that specifically recognizes phosphatidylserine receptor. However, its nuclear localization and the fact that mAb 217 antibody still recognizes the phosphatidylserine receptor in mice lacking Jmjd6, strongly suggest that it does not constitute the receptor for phosphatidylserine and is not involved in apoptotic cell removal.</text>
</comment>
<comment type="sequence caution" evidence="13">
    <conflict type="erroneous initiation">
        <sequence resource="EMBL-CDS" id="BAC65599"/>
    </conflict>
    <text>Extended N-terminus.</text>
</comment>
<dbReference type="EC" id="1.14.11.-"/>
<dbReference type="EMBL" id="AF304118">
    <property type="protein sequence ID" value="AAG27719.1"/>
    <property type="molecule type" value="mRNA"/>
</dbReference>
<dbReference type="EMBL" id="AK122317">
    <property type="protein sequence ID" value="BAC65599.1"/>
    <property type="status" value="ALT_INIT"/>
    <property type="molecule type" value="mRNA"/>
</dbReference>
<dbReference type="EMBL" id="AL645542">
    <property type="status" value="NOT_ANNOTATED_CDS"/>
    <property type="molecule type" value="Genomic_DNA"/>
</dbReference>
<dbReference type="EMBL" id="BC056629">
    <property type="protein sequence ID" value="AAH56629.1"/>
    <property type="molecule type" value="mRNA"/>
</dbReference>
<dbReference type="CCDS" id="CCDS25678.1">
    <molecule id="Q9ERI5-1"/>
</dbReference>
<dbReference type="RefSeq" id="NP_203971.2">
    <molecule id="Q9ERI5-1"/>
    <property type="nucleotide sequence ID" value="NM_033398.3"/>
</dbReference>
<dbReference type="SMR" id="Q9ERI5"/>
<dbReference type="BioGRID" id="223601">
    <property type="interactions" value="7"/>
</dbReference>
<dbReference type="FunCoup" id="Q9ERI5">
    <property type="interactions" value="2930"/>
</dbReference>
<dbReference type="STRING" id="10090.ENSMUSP00000047570"/>
<dbReference type="iPTMnet" id="Q9ERI5"/>
<dbReference type="PhosphoSitePlus" id="Q9ERI5"/>
<dbReference type="PaxDb" id="10090-ENSMUSP00000047570"/>
<dbReference type="ProteomicsDB" id="269122">
    <molecule id="Q9ERI5-1"/>
</dbReference>
<dbReference type="ProteomicsDB" id="269123">
    <molecule id="Q9ERI5-2"/>
</dbReference>
<dbReference type="Pumba" id="Q9ERI5"/>
<dbReference type="Antibodypedia" id="3874">
    <property type="antibodies" value="453 antibodies from 41 providers"/>
</dbReference>
<dbReference type="Ensembl" id="ENSMUST00000047616.10">
    <molecule id="Q9ERI5-1"/>
    <property type="protein sequence ID" value="ENSMUSP00000047570.4"/>
    <property type="gene ID" value="ENSMUSG00000056962.12"/>
</dbReference>
<dbReference type="GeneID" id="107817"/>
<dbReference type="KEGG" id="mmu:107817"/>
<dbReference type="UCSC" id="uc007mmi.1">
    <molecule id="Q9ERI5-1"/>
    <property type="organism name" value="mouse"/>
</dbReference>
<dbReference type="UCSC" id="uc007mmj.1">
    <molecule id="Q9ERI5-2"/>
    <property type="organism name" value="mouse"/>
</dbReference>
<dbReference type="AGR" id="MGI:1858910"/>
<dbReference type="CTD" id="23210"/>
<dbReference type="MGI" id="MGI:1858910">
    <property type="gene designation" value="Jmjd6"/>
</dbReference>
<dbReference type="VEuPathDB" id="HostDB:ENSMUSG00000056962"/>
<dbReference type="eggNOG" id="KOG2130">
    <property type="taxonomic scope" value="Eukaryota"/>
</dbReference>
<dbReference type="GeneTree" id="ENSGT00940000156867"/>
<dbReference type="InParanoid" id="Q9ERI5"/>
<dbReference type="OMA" id="NAWVAMR"/>
<dbReference type="OrthoDB" id="424465at2759"/>
<dbReference type="PhylomeDB" id="Q9ERI5"/>
<dbReference type="TreeFam" id="TF314988"/>
<dbReference type="Reactome" id="R-MMU-3214842">
    <property type="pathway name" value="HDMs demethylate histones"/>
</dbReference>
<dbReference type="Reactome" id="R-MMU-9629569">
    <property type="pathway name" value="Protein hydroxylation"/>
</dbReference>
<dbReference type="BioGRID-ORCS" id="107817">
    <property type="hits" value="21 hits in 88 CRISPR screens"/>
</dbReference>
<dbReference type="ChiTaRS" id="Jmjd6">
    <property type="organism name" value="mouse"/>
</dbReference>
<dbReference type="PRO" id="PR:Q9ERI5"/>
<dbReference type="Proteomes" id="UP000000589">
    <property type="component" value="Chromosome 11"/>
</dbReference>
<dbReference type="RNAct" id="Q9ERI5">
    <property type="molecule type" value="protein"/>
</dbReference>
<dbReference type="Bgee" id="ENSMUSG00000056962">
    <property type="expression patterns" value="Expressed in ear vesicle and 266 other cell types or tissues"/>
</dbReference>
<dbReference type="ExpressionAtlas" id="Q9ERI5">
    <property type="expression patterns" value="baseline and differential"/>
</dbReference>
<dbReference type="GO" id="GO:0005829">
    <property type="term" value="C:cytosol"/>
    <property type="evidence" value="ECO:0000314"/>
    <property type="project" value="MGI"/>
</dbReference>
<dbReference type="GO" id="GO:0005730">
    <property type="term" value="C:nucleolus"/>
    <property type="evidence" value="ECO:0000314"/>
    <property type="project" value="MGI"/>
</dbReference>
<dbReference type="GO" id="GO:0005654">
    <property type="term" value="C:nucleoplasm"/>
    <property type="evidence" value="ECO:0000314"/>
    <property type="project" value="MGI"/>
</dbReference>
<dbReference type="GO" id="GO:0005634">
    <property type="term" value="C:nucleus"/>
    <property type="evidence" value="ECO:0000314"/>
    <property type="project" value="UniProtKB"/>
</dbReference>
<dbReference type="GO" id="GO:0005886">
    <property type="term" value="C:plasma membrane"/>
    <property type="evidence" value="ECO:0000314"/>
    <property type="project" value="MGI"/>
</dbReference>
<dbReference type="GO" id="GO:1990904">
    <property type="term" value="C:ribonucleoprotein complex"/>
    <property type="evidence" value="ECO:0000314"/>
    <property type="project" value="MGI"/>
</dbReference>
<dbReference type="GO" id="GO:0032452">
    <property type="term" value="F:histone demethylase activity"/>
    <property type="evidence" value="ECO:0000250"/>
    <property type="project" value="UniProtKB"/>
</dbReference>
<dbReference type="GO" id="GO:0033746">
    <property type="term" value="F:histone H3R2 demethylase activity"/>
    <property type="evidence" value="ECO:0000250"/>
    <property type="project" value="UniProtKB"/>
</dbReference>
<dbReference type="GO" id="GO:0033749">
    <property type="term" value="F:histone H4R3 demethylase activity"/>
    <property type="evidence" value="ECO:0000250"/>
    <property type="project" value="UniProtKB"/>
</dbReference>
<dbReference type="GO" id="GO:0042802">
    <property type="term" value="F:identical protein binding"/>
    <property type="evidence" value="ECO:0000353"/>
    <property type="project" value="MGI"/>
</dbReference>
<dbReference type="GO" id="GO:0005506">
    <property type="term" value="F:iron ion binding"/>
    <property type="evidence" value="ECO:0007669"/>
    <property type="project" value="Ensembl"/>
</dbReference>
<dbReference type="GO" id="GO:0035515">
    <property type="term" value="F:oxidative RNA demethylase activity"/>
    <property type="evidence" value="ECO:0000250"/>
    <property type="project" value="UniProtKB"/>
</dbReference>
<dbReference type="GO" id="GO:0106140">
    <property type="term" value="F:P-TEFb complex binding"/>
    <property type="evidence" value="ECO:0007669"/>
    <property type="project" value="Ensembl"/>
</dbReference>
<dbReference type="GO" id="GO:0070815">
    <property type="term" value="F:peptidyl-lysine 5-dioxygenase activity"/>
    <property type="evidence" value="ECO:0000250"/>
    <property type="project" value="UniProtKB"/>
</dbReference>
<dbReference type="GO" id="GO:0003723">
    <property type="term" value="F:RNA binding"/>
    <property type="evidence" value="ECO:0000314"/>
    <property type="project" value="MGI"/>
</dbReference>
<dbReference type="GO" id="GO:0038023">
    <property type="term" value="F:signaling receptor activity"/>
    <property type="evidence" value="ECO:0000314"/>
    <property type="project" value="MGI"/>
</dbReference>
<dbReference type="GO" id="GO:0003727">
    <property type="term" value="F:single-stranded RNA binding"/>
    <property type="evidence" value="ECO:0000250"/>
    <property type="project" value="UniProtKB"/>
</dbReference>
<dbReference type="GO" id="GO:0140537">
    <property type="term" value="F:transcription regulator activator activity"/>
    <property type="evidence" value="ECO:0000250"/>
    <property type="project" value="UniProtKB"/>
</dbReference>
<dbReference type="GO" id="GO:0043277">
    <property type="term" value="P:apoptotic cell clearance"/>
    <property type="evidence" value="ECO:0000315"/>
    <property type="project" value="MGI"/>
</dbReference>
<dbReference type="GO" id="GO:0001568">
    <property type="term" value="P:blood vessel development"/>
    <property type="evidence" value="ECO:0000315"/>
    <property type="project" value="MGI"/>
</dbReference>
<dbReference type="GO" id="GO:0007166">
    <property type="term" value="P:cell surface receptor signaling pathway"/>
    <property type="evidence" value="ECO:0000314"/>
    <property type="project" value="MGI"/>
</dbReference>
<dbReference type="GO" id="GO:0048821">
    <property type="term" value="P:erythrocyte development"/>
    <property type="evidence" value="ECO:0000315"/>
    <property type="project" value="MGI"/>
</dbReference>
<dbReference type="GO" id="GO:0007507">
    <property type="term" value="P:heart development"/>
    <property type="evidence" value="ECO:0000315"/>
    <property type="project" value="MGI"/>
</dbReference>
<dbReference type="GO" id="GO:0001822">
    <property type="term" value="P:kidney development"/>
    <property type="evidence" value="ECO:0000315"/>
    <property type="project" value="MGI"/>
</dbReference>
<dbReference type="GO" id="GO:0030324">
    <property type="term" value="P:lung development"/>
    <property type="evidence" value="ECO:0000315"/>
    <property type="project" value="MGI"/>
</dbReference>
<dbReference type="GO" id="GO:0042116">
    <property type="term" value="P:macrophage activation"/>
    <property type="evidence" value="ECO:0000315"/>
    <property type="project" value="MGI"/>
</dbReference>
<dbReference type="GO" id="GO:0140694">
    <property type="term" value="P:membraneless organelle assembly"/>
    <property type="evidence" value="ECO:0000314"/>
    <property type="project" value="UniProt"/>
</dbReference>
<dbReference type="GO" id="GO:0006397">
    <property type="term" value="P:mRNA processing"/>
    <property type="evidence" value="ECO:0007669"/>
    <property type="project" value="UniProtKB-KW"/>
</dbReference>
<dbReference type="GO" id="GO:0032463">
    <property type="term" value="P:negative regulation of protein homooligomerization"/>
    <property type="evidence" value="ECO:0000314"/>
    <property type="project" value="UniProt"/>
</dbReference>
<dbReference type="GO" id="GO:0035513">
    <property type="term" value="P:oxidative RNA demethylation"/>
    <property type="evidence" value="ECO:0000250"/>
    <property type="project" value="UniProtKB"/>
</dbReference>
<dbReference type="GO" id="GO:0018395">
    <property type="term" value="P:peptidyl-lysine hydroxylation to 5-hydroxy-L-lysine"/>
    <property type="evidence" value="ECO:0000250"/>
    <property type="project" value="UniProtKB"/>
</dbReference>
<dbReference type="GO" id="GO:0045893">
    <property type="term" value="P:positive regulation of DNA-templated transcription"/>
    <property type="evidence" value="ECO:0000250"/>
    <property type="project" value="UniProtKB"/>
</dbReference>
<dbReference type="GO" id="GO:0045944">
    <property type="term" value="P:positive regulation of transcription by RNA polymerase II"/>
    <property type="evidence" value="ECO:0000250"/>
    <property type="project" value="UniProtKB"/>
</dbReference>
<dbReference type="GO" id="GO:0051260">
    <property type="term" value="P:protein homooligomerization"/>
    <property type="evidence" value="ECO:0000250"/>
    <property type="project" value="UniProtKB"/>
</dbReference>
<dbReference type="GO" id="GO:0043654">
    <property type="term" value="P:recognition of apoptotic cell"/>
    <property type="evidence" value="ECO:0000314"/>
    <property type="project" value="MGI"/>
</dbReference>
<dbReference type="GO" id="GO:0048024">
    <property type="term" value="P:regulation of mRNA splicing, via spliceosome"/>
    <property type="evidence" value="ECO:0000315"/>
    <property type="project" value="UniProtKB"/>
</dbReference>
<dbReference type="GO" id="GO:0060041">
    <property type="term" value="P:retina development in camera-type eye"/>
    <property type="evidence" value="ECO:0000315"/>
    <property type="project" value="MGI"/>
</dbReference>
<dbReference type="GO" id="GO:0008380">
    <property type="term" value="P:RNA splicing"/>
    <property type="evidence" value="ECO:0007669"/>
    <property type="project" value="UniProtKB-KW"/>
</dbReference>
<dbReference type="GO" id="GO:0002040">
    <property type="term" value="P:sprouting angiogenesis"/>
    <property type="evidence" value="ECO:0000315"/>
    <property type="project" value="UniProtKB"/>
</dbReference>
<dbReference type="GO" id="GO:0033077">
    <property type="term" value="P:T cell differentiation in thymus"/>
    <property type="evidence" value="ECO:0000315"/>
    <property type="project" value="MGI"/>
</dbReference>
<dbReference type="FunFam" id="1.20.1280.270:FF:000001">
    <property type="entry name" value="Bifunctional arginine demethylase and lysyl-hydroxylase JMJD6"/>
    <property type="match status" value="1"/>
</dbReference>
<dbReference type="FunFam" id="2.60.120.650:FF:000010">
    <property type="entry name" value="bifunctional arginine demethylase and lysyl-hydroxylase JMJD6 isoform X2"/>
    <property type="match status" value="1"/>
</dbReference>
<dbReference type="Gene3D" id="1.20.1280.270">
    <property type="match status" value="1"/>
</dbReference>
<dbReference type="Gene3D" id="2.60.120.650">
    <property type="entry name" value="Cupin"/>
    <property type="match status" value="1"/>
</dbReference>
<dbReference type="InterPro" id="IPR003347">
    <property type="entry name" value="JmjC_dom"/>
</dbReference>
<dbReference type="InterPro" id="IPR050910">
    <property type="entry name" value="JMJD6_ArgDemeth/LysHydrox"/>
</dbReference>
<dbReference type="PANTHER" id="PTHR12480">
    <property type="entry name" value="ARGININE DEMETHYLASE AND LYSYL-HYDROXYLASE JMJD"/>
    <property type="match status" value="1"/>
</dbReference>
<dbReference type="PANTHER" id="PTHR12480:SF32">
    <property type="entry name" value="BIFUNCTIONAL ARGININE DEMETHYLASE AND LYSYL-HYDROXYLASE JMJD6"/>
    <property type="match status" value="1"/>
</dbReference>
<dbReference type="Pfam" id="PF02373">
    <property type="entry name" value="JmjC"/>
    <property type="match status" value="1"/>
</dbReference>
<dbReference type="SMART" id="SM00558">
    <property type="entry name" value="JmjC"/>
    <property type="match status" value="1"/>
</dbReference>
<dbReference type="SUPFAM" id="SSF51197">
    <property type="entry name" value="Clavaminate synthase-like"/>
    <property type="match status" value="1"/>
</dbReference>
<dbReference type="PROSITE" id="PS51184">
    <property type="entry name" value="JMJC"/>
    <property type="match status" value="1"/>
</dbReference>
<name>JMJD6_MOUSE</name>
<organism>
    <name type="scientific">Mus musculus</name>
    <name type="common">Mouse</name>
    <dbReference type="NCBI Taxonomy" id="10090"/>
    <lineage>
        <taxon>Eukaryota</taxon>
        <taxon>Metazoa</taxon>
        <taxon>Chordata</taxon>
        <taxon>Craniata</taxon>
        <taxon>Vertebrata</taxon>
        <taxon>Euteleostomi</taxon>
        <taxon>Mammalia</taxon>
        <taxon>Eutheria</taxon>
        <taxon>Euarchontoglires</taxon>
        <taxon>Glires</taxon>
        <taxon>Rodentia</taxon>
        <taxon>Myomorpha</taxon>
        <taxon>Muroidea</taxon>
        <taxon>Muridae</taxon>
        <taxon>Murinae</taxon>
        <taxon>Mus</taxon>
        <taxon>Mus</taxon>
    </lineage>
</organism>
<proteinExistence type="evidence at protein level"/>
<sequence>MNHKSKKRIREAKRSARPELKDSLDWTRHNYYESYPLNPAAVPDNVERADALQLSVKEFVERYERPYKPVVLLNAQEGWSAQEKWTLERLKRKYRNQKFKCGEDNDGYSVKMKMKYYIEYMESTRDDSPLYIFDSSYGEHPKRRKLLEDYKVPKFFTDDLFQYAGEKRRPPYRWFVMGPPRSGTGIHIDPLGTSAWNALVQGHKRWCLFPTNTPRELIKVTREEGGNQQDEAITWFNVIYPRTQLPTWPPEFKPLEILQKPGETVFVPGGWWHVVLNLDTTIAITQNFASSTNFPVVWHKTVRGRPKLSRKWYRILKQEHPELAVLADAVDLQESTGIASDSSSDSSSSSSSSSSDSDSECESGSEGDGTTHRRKKRRTCSMVGNGDTTSQDDCVSKERSSSR</sequence>
<feature type="chain" id="PRO_0000129370" description="Bifunctional arginine demethylase and lysyl-hydroxylase JMJD6">
    <location>
        <begin position="1"/>
        <end position="403"/>
    </location>
</feature>
<feature type="domain" description="JmjC" evidence="3">
    <location>
        <begin position="141"/>
        <end position="305"/>
    </location>
</feature>
<feature type="region of interest" description="Disordered" evidence="4">
    <location>
        <begin position="336"/>
        <end position="403"/>
    </location>
</feature>
<feature type="short sequence motif" description="Nuclear localization signal 1" evidence="2">
    <location>
        <begin position="6"/>
        <end position="10"/>
    </location>
</feature>
<feature type="short sequence motif" description="Nuclear localization signal 2" evidence="2">
    <location>
        <begin position="91"/>
        <end position="95"/>
    </location>
</feature>
<feature type="short sequence motif" description="Nuclear localization signal 3" evidence="2">
    <location>
        <begin position="141"/>
        <end position="145"/>
    </location>
</feature>
<feature type="short sequence motif" description="Nuclear localization signal 4" evidence="2">
    <location>
        <begin position="167"/>
        <end position="170"/>
    </location>
</feature>
<feature type="short sequence motif" description="Nuclear localization signal 5" evidence="2">
    <location>
        <begin position="373"/>
        <end position="378"/>
    </location>
</feature>
<feature type="compositionally biased region" description="Low complexity" evidence="4">
    <location>
        <begin position="340"/>
        <end position="356"/>
    </location>
</feature>
<feature type="compositionally biased region" description="Basic and acidic residues" evidence="4">
    <location>
        <begin position="394"/>
        <end position="403"/>
    </location>
</feature>
<feature type="binding site" evidence="1">
    <location>
        <position position="184"/>
    </location>
    <ligand>
        <name>substrate</name>
    </ligand>
</feature>
<feature type="binding site" evidence="3">
    <location>
        <position position="187"/>
    </location>
    <ligand>
        <name>Fe cation</name>
        <dbReference type="ChEBI" id="CHEBI:24875"/>
        <note>catalytic</note>
    </ligand>
</feature>
<feature type="binding site" evidence="3">
    <location>
        <position position="189"/>
    </location>
    <ligand>
        <name>Fe cation</name>
        <dbReference type="ChEBI" id="CHEBI:24875"/>
        <note>catalytic</note>
    </ligand>
</feature>
<feature type="binding site" evidence="2">
    <location>
        <position position="197"/>
    </location>
    <ligand>
        <name>2-oxoglutarate</name>
        <dbReference type="ChEBI" id="CHEBI:16810"/>
    </ligand>
</feature>
<feature type="binding site" evidence="1">
    <location>
        <position position="204"/>
    </location>
    <ligand>
        <name>substrate</name>
    </ligand>
</feature>
<feature type="binding site" evidence="3">
    <location>
        <position position="273"/>
    </location>
    <ligand>
        <name>Fe cation</name>
        <dbReference type="ChEBI" id="CHEBI:24875"/>
        <note>catalytic</note>
    </ligand>
</feature>
<feature type="binding site" evidence="2">
    <location>
        <position position="285"/>
    </location>
    <ligand>
        <name>2-oxoglutarate</name>
        <dbReference type="ChEBI" id="CHEBI:16810"/>
    </ligand>
</feature>
<feature type="splice variant" id="VSP_014024" description="In isoform 2." evidence="12">
    <original>GWWHVVLNLDTTIAITQNFASSTNFPVVW</original>
    <variation>IDELEETIPVRPSSDWSGLVLYCHFGVES</variation>
    <location>
        <begin position="270"/>
        <end position="298"/>
    </location>
</feature>
<feature type="splice variant" id="VSP_014025" description="In isoform 2." evidence="12">
    <location>
        <begin position="299"/>
        <end position="403"/>
    </location>
</feature>
<feature type="mutagenesis site" description="Loss of lysyl-hydroxylase activity." evidence="11">
    <original>N</original>
    <variation>A</variation>
    <location>
        <position position="277"/>
    </location>
</feature>
<feature type="sequence conflict" description="In Ref. 1; AAG27719 and 4; AAH56629." evidence="13" ref="1 4">
    <original>P</original>
    <variation>S</variation>
    <location>
        <position position="43"/>
    </location>
</feature>
<keyword id="KW-0025">Alternative splicing</keyword>
<keyword id="KW-0156">Chromatin regulator</keyword>
<keyword id="KW-0963">Cytoplasm</keyword>
<keyword id="KW-0217">Developmental protein</keyword>
<keyword id="KW-0221">Differentiation</keyword>
<keyword id="KW-0223">Dioxygenase</keyword>
<keyword id="KW-0408">Iron</keyword>
<keyword id="KW-0479">Metal-binding</keyword>
<keyword id="KW-0507">mRNA processing</keyword>
<keyword id="KW-0508">mRNA splicing</keyword>
<keyword id="KW-0539">Nucleus</keyword>
<keyword id="KW-0560">Oxidoreductase</keyword>
<keyword id="KW-1185">Reference proteome</keyword>
<keyword id="KW-0694">RNA-binding</keyword>
<keyword id="KW-0804">Transcription</keyword>
<keyword id="KW-0805">Transcription regulation</keyword>
<reference key="1">
    <citation type="journal article" date="2000" name="Nature">
        <title>A receptor for phosphatidylserine-specific clearance of apoptotic cells.</title>
        <authorList>
            <person name="Fadok V.A."/>
            <person name="Bratton D.L."/>
            <person name="Rose D.M."/>
            <person name="Pearson A."/>
            <person name="Ezekewitz R.A."/>
            <person name="Henson P.M."/>
        </authorList>
    </citation>
    <scope>NUCLEOTIDE SEQUENCE [MRNA] (ISOFORM 1)</scope>
    <source>
        <strain>Swiss Webster</strain>
        <tissue>Brain</tissue>
    </source>
</reference>
<reference key="2">
    <citation type="journal article" date="2003" name="DNA Res.">
        <title>Prediction of the coding sequences of mouse homologues of KIAA gene: II. The complete nucleotide sequences of 400 mouse KIAA-homologous cDNAs identified by screening of terminal sequences of cDNA clones randomly sampled from size-fractionated libraries.</title>
        <authorList>
            <person name="Okazaki N."/>
            <person name="Kikuno R."/>
            <person name="Ohara R."/>
            <person name="Inamoto S."/>
            <person name="Aizawa H."/>
            <person name="Yuasa S."/>
            <person name="Nakajima D."/>
            <person name="Nagase T."/>
            <person name="Ohara O."/>
            <person name="Koga H."/>
        </authorList>
    </citation>
    <scope>NUCLEOTIDE SEQUENCE [LARGE SCALE MRNA] (ISOFORM 2)</scope>
    <source>
        <tissue>Brain</tissue>
    </source>
</reference>
<reference key="3">
    <citation type="journal article" date="2009" name="PLoS Biol.">
        <title>Lineage-specific biology revealed by a finished genome assembly of the mouse.</title>
        <authorList>
            <person name="Church D.M."/>
            <person name="Goodstadt L."/>
            <person name="Hillier L.W."/>
            <person name="Zody M.C."/>
            <person name="Goldstein S."/>
            <person name="She X."/>
            <person name="Bult C.J."/>
            <person name="Agarwala R."/>
            <person name="Cherry J.L."/>
            <person name="DiCuccio M."/>
            <person name="Hlavina W."/>
            <person name="Kapustin Y."/>
            <person name="Meric P."/>
            <person name="Maglott D."/>
            <person name="Birtle Z."/>
            <person name="Marques A.C."/>
            <person name="Graves T."/>
            <person name="Zhou S."/>
            <person name="Teague B."/>
            <person name="Potamousis K."/>
            <person name="Churas C."/>
            <person name="Place M."/>
            <person name="Herschleb J."/>
            <person name="Runnheim R."/>
            <person name="Forrest D."/>
            <person name="Amos-Landgraf J."/>
            <person name="Schwartz D.C."/>
            <person name="Cheng Z."/>
            <person name="Lindblad-Toh K."/>
            <person name="Eichler E.E."/>
            <person name="Ponting C.P."/>
        </authorList>
    </citation>
    <scope>NUCLEOTIDE SEQUENCE [LARGE SCALE GENOMIC DNA]</scope>
    <source>
        <strain>C57BL/6J</strain>
    </source>
</reference>
<reference key="4">
    <citation type="journal article" date="2004" name="Genome Res.">
        <title>The status, quality, and expansion of the NIH full-length cDNA project: the Mammalian Gene Collection (MGC).</title>
        <authorList>
            <consortium name="The MGC Project Team"/>
        </authorList>
    </citation>
    <scope>NUCLEOTIDE SEQUENCE [LARGE SCALE MRNA] (ISOFORM 1)</scope>
    <source>
        <strain>129</strain>
        <tissue>Mammary tumor</tissue>
    </source>
</reference>
<reference key="5">
    <citation type="journal article" date="2003" name="Science">
        <title>Phosphatidylserine receptor is required for clearance of apoptotic cells.</title>
        <authorList>
            <person name="Li M.O."/>
            <person name="Sarkisian M.R."/>
            <person name="Mehal W.Z."/>
            <person name="Rakic P."/>
            <person name="Flavell R.A."/>
        </authorList>
    </citation>
    <scope>DISRUPTION PHENOTYPE</scope>
    <scope>TISSUE SPECIFICITY</scope>
    <scope>DEVELOPMENTAL STAGE</scope>
</reference>
<reference key="6">
    <citation type="journal article" date="2004" name="Blood">
        <title>Defective fetal liver erythropoiesis and T lymphopoiesis in mice lacking the phosphatidylserine receptor.</title>
        <authorList>
            <person name="Kunisaki Y."/>
            <person name="Masuko S."/>
            <person name="Noda M."/>
            <person name="Inayoshi A."/>
            <person name="Sanui T."/>
            <person name="Harada M."/>
            <person name="Sasazuki T."/>
            <person name="Fukui Y."/>
        </authorList>
    </citation>
    <scope>DISRUPTION PHENOTYPE</scope>
</reference>
<reference key="7">
    <citation type="journal article" date="2004" name="Exp. Cell Res.">
        <title>Nuclear localization of the phosphatidylserine receptor protein via multiple nuclear localization signals.</title>
        <authorList>
            <person name="Cui P."/>
            <person name="Qin B."/>
            <person name="Liu N."/>
            <person name="Pan G."/>
            <person name="Pei D."/>
        </authorList>
    </citation>
    <scope>SUBCELLULAR LOCATION</scope>
</reference>
<reference key="8">
    <citation type="journal article" date="2004" name="J. Biol.">
        <title>The phosphatidylserine receptor has essential functions during embryogenesis but not in apoptotic cell removal.</title>
        <authorList>
            <person name="Boese J."/>
            <person name="Gruber A.D."/>
            <person name="Helming L."/>
            <person name="Schiebe S."/>
            <person name="Wegener I."/>
            <person name="Hafner M."/>
            <person name="Beales M."/>
            <person name="Koentgen F."/>
            <person name="Lengeling A."/>
        </authorList>
    </citation>
    <scope>DISRUPTION PHENOTYPE</scope>
    <scope>FUNCTION</scope>
    <scope>TISSUE SPECIFICITY</scope>
    <scope>DEVELOPMENTAL STAGE</scope>
</reference>
<reference key="9">
    <citation type="journal article" date="2004" name="J. Biol.">
        <title>Hide and seek: the secret identity of the phosphatidylserine receptor.</title>
        <authorList>
            <person name="Williamson P."/>
            <person name="Schlegel R.A."/>
        </authorList>
    </citation>
    <scope>REVIEW ON FUNCTION</scope>
</reference>
<reference key="10">
    <citation type="journal article" date="2011" name="Proc. Natl. Acad. Sci. U.S.A.">
        <title>Jumonji domain-containing protein 6 (Jmjd6) is required for angiogenic sprouting and regulates splicing of VEGF-receptor 1.</title>
        <authorList>
            <person name="Boeckel J.N."/>
            <person name="Guarani V."/>
            <person name="Koyanagi M."/>
            <person name="Roexe T."/>
            <person name="Lengeling A."/>
            <person name="Schermuly R.T."/>
            <person name="Gellert P."/>
            <person name="Braun T."/>
            <person name="Zeiher A."/>
            <person name="Dimmeler S."/>
        </authorList>
    </citation>
    <scope>FUNCTION</scope>
    <scope>INTERACTION WITH U2AF2</scope>
</reference>
<reference key="11">
    <citation type="journal article" date="2014" name="Proc. Natl. Acad. Sci. U.S.A.">
        <title>Liat1, an arginyltransferase-binding protein whose evolution among primates involved changes in the numbers of its 10-residue repeats.</title>
        <authorList>
            <person name="Brower C.S."/>
            <person name="Rosen C.E."/>
            <person name="Jones R.H."/>
            <person name="Wadas B.C."/>
            <person name="Piatkov K.I."/>
            <person name="Varshavsky A."/>
        </authorList>
    </citation>
    <scope>FUNCTION</scope>
</reference>
<reference key="12">
    <citation type="journal article" date="2021" name="Proc. Natl. Acad. Sci. U.S.A.">
        <title>The Ligand of Ate1 is intrinsically disordered and participates in nucleolar phase separation regulated by Jumonji Domain Containing 6.</title>
        <authorList>
            <person name="Arva A."/>
            <person name="Kasu Y.A.T."/>
            <person name="Duncan J."/>
            <person name="Alkhatatbeh M.A."/>
            <person name="Brower C.S."/>
        </authorList>
    </citation>
    <scope>FUNCTION</scope>
    <scope>MUTAGENESIS OF ASN-277</scope>
</reference>